<sequence length="264" mass="29941">MAVGKNKRLTKGGKKGAKKKIVDPFSKKDWYDVKAPAMFNIRNLGKTLVTRTQGTKIASDGLKGRVFEVSLADLQNDEVAFRKFKLITEDVQGKNCLTNFHGMDLTRDKMCSMVKKWQTMIEAHVDVKTTDGYLLRLFCVGFTKKRNNQIRKTSYAQHQQVRQIRKKMFEIMTREVQTNDLKEVVNKLIPDSIGKDIEKACQSIYPLHDVYVRKVKMLKKPKFELGKLMELHGEGGGTGKPAGDETGAKVERADGYEPPVQESV</sequence>
<gene>
    <name type="primary">rps3a-a</name>
</gene>
<protein>
    <recommendedName>
        <fullName evidence="3">Small ribosomal subunit protein eS1A</fullName>
    </recommendedName>
    <alternativeName>
        <fullName evidence="5">40S ribosomal protein S3a-A</fullName>
    </alternativeName>
</protein>
<dbReference type="EMBL" id="BC047260">
    <property type="protein sequence ID" value="AAH47260.1"/>
    <property type="molecule type" value="mRNA"/>
</dbReference>
<dbReference type="RefSeq" id="NP_001080325.1">
    <property type="nucleotide sequence ID" value="NM_001086856.1"/>
</dbReference>
<dbReference type="PDB" id="7OYC">
    <property type="method" value="EM"/>
    <property type="resolution" value="2.40 A"/>
    <property type="chains" value="B2=1-264"/>
</dbReference>
<dbReference type="PDBsum" id="7OYC"/>
<dbReference type="EMDB" id="EMD-13113"/>
<dbReference type="SMR" id="Q801S3"/>
<dbReference type="BioGRID" id="98259">
    <property type="interactions" value="3"/>
</dbReference>
<dbReference type="IntAct" id="Q801S3">
    <property type="interactions" value="1"/>
</dbReference>
<dbReference type="DNASU" id="380017"/>
<dbReference type="GeneID" id="380017"/>
<dbReference type="KEGG" id="xla:380017"/>
<dbReference type="AGR" id="Xenbase:XB-GENE-976737"/>
<dbReference type="CTD" id="380017"/>
<dbReference type="Xenbase" id="XB-GENE-976737">
    <property type="gene designation" value="rps3a.S"/>
</dbReference>
<dbReference type="OMA" id="TRFKGHE"/>
<dbReference type="OrthoDB" id="9834376at2759"/>
<dbReference type="Proteomes" id="UP000186698">
    <property type="component" value="Chromosome 1S"/>
</dbReference>
<dbReference type="Bgee" id="380017">
    <property type="expression patterns" value="Expressed in lung and 19 other cell types or tissues"/>
</dbReference>
<dbReference type="GO" id="GO:0005829">
    <property type="term" value="C:cytosol"/>
    <property type="evidence" value="ECO:0000318"/>
    <property type="project" value="GO_Central"/>
</dbReference>
<dbReference type="GO" id="GO:0022627">
    <property type="term" value="C:cytosolic small ribosomal subunit"/>
    <property type="evidence" value="ECO:0007669"/>
    <property type="project" value="UniProtKB-UniRule"/>
</dbReference>
<dbReference type="GO" id="GO:0005730">
    <property type="term" value="C:nucleolus"/>
    <property type="evidence" value="ECO:0007669"/>
    <property type="project" value="UniProtKB-SubCell"/>
</dbReference>
<dbReference type="GO" id="GO:0032040">
    <property type="term" value="C:small-subunit processome"/>
    <property type="evidence" value="ECO:0000250"/>
    <property type="project" value="UniProtKB"/>
</dbReference>
<dbReference type="GO" id="GO:0003735">
    <property type="term" value="F:structural constituent of ribosome"/>
    <property type="evidence" value="ECO:0007669"/>
    <property type="project" value="UniProtKB-UniRule"/>
</dbReference>
<dbReference type="GO" id="GO:0042274">
    <property type="term" value="P:ribosomal small subunit biogenesis"/>
    <property type="evidence" value="ECO:0000250"/>
    <property type="project" value="UniProtKB"/>
</dbReference>
<dbReference type="GO" id="GO:0006412">
    <property type="term" value="P:translation"/>
    <property type="evidence" value="ECO:0007669"/>
    <property type="project" value="UniProtKB-UniRule"/>
</dbReference>
<dbReference type="HAMAP" id="MF_03122">
    <property type="entry name" value="Ribosomal_eS1_euk"/>
    <property type="match status" value="1"/>
</dbReference>
<dbReference type="InterPro" id="IPR001593">
    <property type="entry name" value="Ribosomal_eS1"/>
</dbReference>
<dbReference type="InterPro" id="IPR018281">
    <property type="entry name" value="Ribosomal_eS1_CS"/>
</dbReference>
<dbReference type="InterPro" id="IPR027500">
    <property type="entry name" value="Ribosomal_eS1_euk"/>
</dbReference>
<dbReference type="PANTHER" id="PTHR11830">
    <property type="entry name" value="40S RIBOSOMAL PROTEIN S3A"/>
    <property type="match status" value="1"/>
</dbReference>
<dbReference type="Pfam" id="PF01015">
    <property type="entry name" value="Ribosomal_S3Ae"/>
    <property type="match status" value="1"/>
</dbReference>
<dbReference type="SMART" id="SM01397">
    <property type="entry name" value="Ribosomal_S3Ae"/>
    <property type="match status" value="1"/>
</dbReference>
<dbReference type="PROSITE" id="PS01191">
    <property type="entry name" value="RIBOSOMAL_S3AE"/>
    <property type="match status" value="1"/>
</dbReference>
<proteinExistence type="evidence at protein level"/>
<keyword id="KW-0002">3D-structure</keyword>
<keyword id="KW-0963">Cytoplasm</keyword>
<keyword id="KW-0539">Nucleus</keyword>
<keyword id="KW-1185">Reference proteome</keyword>
<keyword id="KW-0687">Ribonucleoprotein</keyword>
<keyword id="KW-0689">Ribosomal protein</keyword>
<evidence type="ECO:0000250" key="1">
    <source>
        <dbReference type="UniProtKB" id="P61247"/>
    </source>
</evidence>
<evidence type="ECO:0000250" key="2">
    <source>
        <dbReference type="UniProtKB" id="P97351"/>
    </source>
</evidence>
<evidence type="ECO:0000255" key="3">
    <source>
        <dbReference type="HAMAP-Rule" id="MF_03122"/>
    </source>
</evidence>
<evidence type="ECO:0000256" key="4">
    <source>
        <dbReference type="SAM" id="MobiDB-lite"/>
    </source>
</evidence>
<evidence type="ECO:0000305" key="5"/>
<name>RS3AA_XENLA</name>
<accession>Q801S3</accession>
<feature type="initiator methionine" description="Removed" evidence="3">
    <location>
        <position position="1"/>
    </location>
</feature>
<feature type="chain" id="PRO_0000230769" description="Small ribosomal subunit protein eS1A">
    <location>
        <begin position="2"/>
        <end position="264"/>
    </location>
</feature>
<feature type="region of interest" description="Disordered" evidence="4">
    <location>
        <begin position="233"/>
        <end position="264"/>
    </location>
</feature>
<feature type="compositionally biased region" description="Basic and acidic residues" evidence="4">
    <location>
        <begin position="242"/>
        <end position="255"/>
    </location>
</feature>
<comment type="function">
    <text evidence="1 3">Component of the small ribosomal subunit. The ribosome is a large ribonucleoprotein complex responsible for the synthesis of proteins in the cell. Part of the small subunit (SSU) processome, first precursor of the small eukaryotic ribosomal subunit. During the assembly of the SSU processome in the nucleolus, many ribosome biogenesis factors, an RNA chaperone and ribosomal proteins associate with the nascent pre-rRNA and work in concert to generate RNA folding, modifications, rearrangements and cleavage as well as targeted degradation of pre-ribosomal RNA by the RNA exosome (By similarity). May play a role during erythropoiesis (By similarity).</text>
</comment>
<comment type="subunit">
    <text evidence="1">Component of the small ribosomal subunit. Mature ribosomes consist of a small (40S) and a large (60S) subunit. The 40S subunit contains about 33 different proteins and 1 molecule of RNA (18S). The 60S subunit contains about 49 different proteins and 3 molecules of RNA (28S, 5.8S and 5S). Part of the small subunit (SSU) processome, composed of more than 70 proteins and the RNA chaperone small nucleolar RNA (snoRNA) U3.</text>
</comment>
<comment type="subcellular location">
    <subcellularLocation>
        <location evidence="2 3">Cytoplasm</location>
    </subcellularLocation>
    <subcellularLocation>
        <location evidence="2 3">Nucleus</location>
    </subcellularLocation>
    <subcellularLocation>
        <location evidence="1">Nucleus</location>
        <location evidence="1">Nucleolus</location>
    </subcellularLocation>
</comment>
<comment type="similarity">
    <text evidence="3">Belongs to the eukaryotic ribosomal protein eS1 family.</text>
</comment>
<reference key="1">
    <citation type="submission" date="2003-02" db="EMBL/GenBank/DDBJ databases">
        <authorList>
            <consortium name="NIH - Xenopus Gene Collection (XGC) project"/>
        </authorList>
    </citation>
    <scope>NUCLEOTIDE SEQUENCE [LARGE SCALE MRNA]</scope>
    <source>
        <tissue>Embryo</tissue>
    </source>
</reference>
<organism>
    <name type="scientific">Xenopus laevis</name>
    <name type="common">African clawed frog</name>
    <dbReference type="NCBI Taxonomy" id="8355"/>
    <lineage>
        <taxon>Eukaryota</taxon>
        <taxon>Metazoa</taxon>
        <taxon>Chordata</taxon>
        <taxon>Craniata</taxon>
        <taxon>Vertebrata</taxon>
        <taxon>Euteleostomi</taxon>
        <taxon>Amphibia</taxon>
        <taxon>Batrachia</taxon>
        <taxon>Anura</taxon>
        <taxon>Pipoidea</taxon>
        <taxon>Pipidae</taxon>
        <taxon>Xenopodinae</taxon>
        <taxon>Xenopus</taxon>
        <taxon>Xenopus</taxon>
    </lineage>
</organism>